<name>MSCL_PSEE4</name>
<reference key="1">
    <citation type="journal article" date="2006" name="Nat. Biotechnol.">
        <title>Complete genome sequence of the entomopathogenic and metabolically versatile soil bacterium Pseudomonas entomophila.</title>
        <authorList>
            <person name="Vodovar N."/>
            <person name="Vallenet D."/>
            <person name="Cruveiller S."/>
            <person name="Rouy Z."/>
            <person name="Barbe V."/>
            <person name="Acosta C."/>
            <person name="Cattolico L."/>
            <person name="Jubin C."/>
            <person name="Lajus A."/>
            <person name="Segurens B."/>
            <person name="Vacherie B."/>
            <person name="Wincker P."/>
            <person name="Weissenbach J."/>
            <person name="Lemaitre B."/>
            <person name="Medigue C."/>
            <person name="Boccard F."/>
        </authorList>
    </citation>
    <scope>NUCLEOTIDE SEQUENCE [LARGE SCALE GENOMIC DNA]</scope>
    <source>
        <strain>L48</strain>
    </source>
</reference>
<keyword id="KW-0997">Cell inner membrane</keyword>
<keyword id="KW-1003">Cell membrane</keyword>
<keyword id="KW-0407">Ion channel</keyword>
<keyword id="KW-0406">Ion transport</keyword>
<keyword id="KW-0472">Membrane</keyword>
<keyword id="KW-0812">Transmembrane</keyword>
<keyword id="KW-1133">Transmembrane helix</keyword>
<keyword id="KW-0813">Transport</keyword>
<accession>Q1I4K7</accession>
<organism>
    <name type="scientific">Pseudomonas entomophila (strain L48)</name>
    <dbReference type="NCBI Taxonomy" id="384676"/>
    <lineage>
        <taxon>Bacteria</taxon>
        <taxon>Pseudomonadati</taxon>
        <taxon>Pseudomonadota</taxon>
        <taxon>Gammaproteobacteria</taxon>
        <taxon>Pseudomonadales</taxon>
        <taxon>Pseudomonadaceae</taxon>
        <taxon>Pseudomonas</taxon>
    </lineage>
</organism>
<gene>
    <name evidence="1" type="primary">mscL</name>
    <name type="ordered locus">PSEEN4771</name>
</gene>
<protein>
    <recommendedName>
        <fullName evidence="1">Large-conductance mechanosensitive channel</fullName>
    </recommendedName>
</protein>
<comment type="function">
    <text evidence="1">Channel that opens in response to stretch forces in the membrane lipid bilayer. May participate in the regulation of osmotic pressure changes within the cell.</text>
</comment>
<comment type="subunit">
    <text evidence="1">Homopentamer.</text>
</comment>
<comment type="subcellular location">
    <subcellularLocation>
        <location evidence="1">Cell inner membrane</location>
        <topology evidence="1">Multi-pass membrane protein</topology>
    </subcellularLocation>
</comment>
<comment type="similarity">
    <text evidence="1">Belongs to the MscL family.</text>
</comment>
<feature type="chain" id="PRO_1000015410" description="Large-conductance mechanosensitive channel">
    <location>
        <begin position="1"/>
        <end position="137"/>
    </location>
</feature>
<feature type="transmembrane region" description="Helical" evidence="1">
    <location>
        <begin position="9"/>
        <end position="29"/>
    </location>
</feature>
<feature type="transmembrane region" description="Helical" evidence="1">
    <location>
        <begin position="79"/>
        <end position="99"/>
    </location>
</feature>
<evidence type="ECO:0000255" key="1">
    <source>
        <dbReference type="HAMAP-Rule" id="MF_00115"/>
    </source>
</evidence>
<proteinExistence type="inferred from homology"/>
<dbReference type="EMBL" id="CT573326">
    <property type="protein sequence ID" value="CAK17429.1"/>
    <property type="molecule type" value="Genomic_DNA"/>
</dbReference>
<dbReference type="RefSeq" id="WP_011535791.1">
    <property type="nucleotide sequence ID" value="NC_008027.1"/>
</dbReference>
<dbReference type="SMR" id="Q1I4K7"/>
<dbReference type="STRING" id="384676.PSEEN4771"/>
<dbReference type="GeneID" id="58770266"/>
<dbReference type="KEGG" id="pen:PSEEN4771"/>
<dbReference type="eggNOG" id="COG1970">
    <property type="taxonomic scope" value="Bacteria"/>
</dbReference>
<dbReference type="HOGENOM" id="CLU_095787_0_0_6"/>
<dbReference type="OrthoDB" id="9810350at2"/>
<dbReference type="Proteomes" id="UP000000658">
    <property type="component" value="Chromosome"/>
</dbReference>
<dbReference type="GO" id="GO:0005886">
    <property type="term" value="C:plasma membrane"/>
    <property type="evidence" value="ECO:0007669"/>
    <property type="project" value="UniProtKB-SubCell"/>
</dbReference>
<dbReference type="GO" id="GO:0008381">
    <property type="term" value="F:mechanosensitive monoatomic ion channel activity"/>
    <property type="evidence" value="ECO:0007669"/>
    <property type="project" value="UniProtKB-UniRule"/>
</dbReference>
<dbReference type="FunFam" id="1.10.1200.120:FF:000001">
    <property type="entry name" value="Large-conductance mechanosensitive channel"/>
    <property type="match status" value="1"/>
</dbReference>
<dbReference type="Gene3D" id="1.10.1200.120">
    <property type="entry name" value="Large-conductance mechanosensitive channel, MscL, domain 1"/>
    <property type="match status" value="1"/>
</dbReference>
<dbReference type="HAMAP" id="MF_00115">
    <property type="entry name" value="MscL"/>
    <property type="match status" value="1"/>
</dbReference>
<dbReference type="InterPro" id="IPR019823">
    <property type="entry name" value="Mechanosensitive_channel_CS"/>
</dbReference>
<dbReference type="InterPro" id="IPR001185">
    <property type="entry name" value="MS_channel"/>
</dbReference>
<dbReference type="InterPro" id="IPR037673">
    <property type="entry name" value="MSC/AndL"/>
</dbReference>
<dbReference type="InterPro" id="IPR036019">
    <property type="entry name" value="MscL_channel"/>
</dbReference>
<dbReference type="NCBIfam" id="TIGR00220">
    <property type="entry name" value="mscL"/>
    <property type="match status" value="1"/>
</dbReference>
<dbReference type="NCBIfam" id="NF001843">
    <property type="entry name" value="PRK00567.1-4"/>
    <property type="match status" value="1"/>
</dbReference>
<dbReference type="PANTHER" id="PTHR30266:SF2">
    <property type="entry name" value="LARGE-CONDUCTANCE MECHANOSENSITIVE CHANNEL"/>
    <property type="match status" value="1"/>
</dbReference>
<dbReference type="PANTHER" id="PTHR30266">
    <property type="entry name" value="MECHANOSENSITIVE CHANNEL MSCL"/>
    <property type="match status" value="1"/>
</dbReference>
<dbReference type="Pfam" id="PF01741">
    <property type="entry name" value="MscL"/>
    <property type="match status" value="1"/>
</dbReference>
<dbReference type="PRINTS" id="PR01264">
    <property type="entry name" value="MECHCHANNEL"/>
</dbReference>
<dbReference type="SUPFAM" id="SSF81330">
    <property type="entry name" value="Gated mechanosensitive channel"/>
    <property type="match status" value="1"/>
</dbReference>
<dbReference type="PROSITE" id="PS01327">
    <property type="entry name" value="MSCL"/>
    <property type="match status" value="1"/>
</dbReference>
<sequence length="137" mass="14500">MGMLSEFKAFAVKGNVVDMAVGIIIGAAFGKIVSSFVGDVIMPPIGLLIGGVDFSDLAITLKAAEGDVPAVVLAYGKFIQTILDFIIVAFAIFMGVKVINRLKREEAVAPTAPPVPSAEETLLTEIRDLLKAQNRQP</sequence>